<dbReference type="EMBL" id="L42023">
    <property type="protein sequence ID" value="AAC22508.1"/>
    <property type="molecule type" value="Genomic_DNA"/>
</dbReference>
<dbReference type="PIR" id="A64160">
    <property type="entry name" value="A64160"/>
</dbReference>
<dbReference type="RefSeq" id="NP_439011.1">
    <property type="nucleotide sequence ID" value="NC_000907.1"/>
</dbReference>
<dbReference type="SMR" id="P44902"/>
<dbReference type="STRING" id="71421.HI_0851"/>
<dbReference type="EnsemblBacteria" id="AAC22508">
    <property type="protein sequence ID" value="AAC22508"/>
    <property type="gene ID" value="HI_0851"/>
</dbReference>
<dbReference type="KEGG" id="hin:HI_0851"/>
<dbReference type="PATRIC" id="fig|71421.8.peg.892"/>
<dbReference type="eggNOG" id="COG1763">
    <property type="taxonomic scope" value="Bacteria"/>
</dbReference>
<dbReference type="HOGENOM" id="CLU_068199_2_1_6"/>
<dbReference type="OrthoDB" id="9804758at2"/>
<dbReference type="PhylomeDB" id="P44902"/>
<dbReference type="BioCyc" id="HINF71421:G1GJ1-891-MONOMER"/>
<dbReference type="Proteomes" id="UP000000579">
    <property type="component" value="Chromosome"/>
</dbReference>
<dbReference type="GO" id="GO:0005525">
    <property type="term" value="F:GTP binding"/>
    <property type="evidence" value="ECO:0000318"/>
    <property type="project" value="GO_Central"/>
</dbReference>
<dbReference type="GO" id="GO:0006777">
    <property type="term" value="P:Mo-molybdopterin cofactor biosynthetic process"/>
    <property type="evidence" value="ECO:0007669"/>
    <property type="project" value="UniProtKB-KW"/>
</dbReference>
<dbReference type="CDD" id="cd03116">
    <property type="entry name" value="MobB"/>
    <property type="match status" value="1"/>
</dbReference>
<dbReference type="Gene3D" id="2.20.25.120">
    <property type="match status" value="1"/>
</dbReference>
<dbReference type="Gene3D" id="3.40.50.300">
    <property type="entry name" value="P-loop containing nucleotide triphosphate hydrolases"/>
    <property type="match status" value="1"/>
</dbReference>
<dbReference type="InterPro" id="IPR052539">
    <property type="entry name" value="MGD_biosynthesis_adapter"/>
</dbReference>
<dbReference type="InterPro" id="IPR004435">
    <property type="entry name" value="MobB_dom"/>
</dbReference>
<dbReference type="InterPro" id="IPR027417">
    <property type="entry name" value="P-loop_NTPase"/>
</dbReference>
<dbReference type="NCBIfam" id="TIGR00176">
    <property type="entry name" value="mobB"/>
    <property type="match status" value="1"/>
</dbReference>
<dbReference type="NCBIfam" id="NF008021">
    <property type="entry name" value="PRK10751.1"/>
    <property type="match status" value="1"/>
</dbReference>
<dbReference type="PANTHER" id="PTHR40072:SF1">
    <property type="entry name" value="MOLYBDOPTERIN-GUANINE DINUCLEOTIDE BIOSYNTHESIS ADAPTER PROTEIN"/>
    <property type="match status" value="1"/>
</dbReference>
<dbReference type="PANTHER" id="PTHR40072">
    <property type="entry name" value="MOLYBDOPTERIN-GUANINE DINUCLEOTIDE BIOSYNTHESIS ADAPTER PROTEIN-RELATED"/>
    <property type="match status" value="1"/>
</dbReference>
<dbReference type="Pfam" id="PF03205">
    <property type="entry name" value="MobB"/>
    <property type="match status" value="1"/>
</dbReference>
<dbReference type="SUPFAM" id="SSF52540">
    <property type="entry name" value="P-loop containing nucleoside triphosphate hydrolases"/>
    <property type="match status" value="1"/>
</dbReference>
<organism>
    <name type="scientific">Haemophilus influenzae (strain ATCC 51907 / DSM 11121 / KW20 / Rd)</name>
    <dbReference type="NCBI Taxonomy" id="71421"/>
    <lineage>
        <taxon>Bacteria</taxon>
        <taxon>Pseudomonadati</taxon>
        <taxon>Pseudomonadota</taxon>
        <taxon>Gammaproteobacteria</taxon>
        <taxon>Pasteurellales</taxon>
        <taxon>Pasteurellaceae</taxon>
        <taxon>Haemophilus</taxon>
    </lineage>
</organism>
<accession>P44902</accession>
<gene>
    <name type="primary">mobB</name>
    <name type="ordered locus">HI_0851</name>
</gene>
<proteinExistence type="evidence at protein level"/>
<sequence>MIFKVIFMNNQIPLLGITGYSGSGKTTLLEKLIPELIARHIRVSVIKHSHHNMQVDKEGKDSWRMKEAGSSQVILANDERWAIMTETPKPVSLDYLAQQFDRTLTDLVLVEGFKQEPIPKILLHRQEMTKPLPEIDEYVLAVATNYPLEIDRTLLDINRIPQIADFIENWLHHFHGAR</sequence>
<feature type="chain" id="PRO_0000096529" description="Molybdopterin-guanine dinucleotide biosynthesis adapter protein">
    <location>
        <begin position="1"/>
        <end position="178"/>
    </location>
</feature>
<feature type="binding site" evidence="1">
    <location>
        <begin position="22"/>
        <end position="26"/>
    </location>
    <ligand>
        <name>GTP</name>
        <dbReference type="ChEBI" id="CHEBI:37565"/>
    </ligand>
</feature>
<feature type="binding site" evidence="2">
    <location>
        <begin position="56"/>
        <end position="59"/>
    </location>
    <ligand>
        <name>GTP</name>
        <dbReference type="ChEBI" id="CHEBI:37565"/>
    </ligand>
</feature>
<feature type="binding site" evidence="2">
    <location>
        <begin position="103"/>
        <end position="106"/>
    </location>
    <ligand>
        <name>GTP</name>
        <dbReference type="ChEBI" id="CHEBI:37565"/>
    </ligand>
</feature>
<keyword id="KW-0342">GTP-binding</keyword>
<keyword id="KW-0501">Molybdenum cofactor biosynthesis</keyword>
<keyword id="KW-0547">Nucleotide-binding</keyword>
<keyword id="KW-1185">Reference proteome</keyword>
<protein>
    <recommendedName>
        <fullName>Molybdopterin-guanine dinucleotide biosynthesis adapter protein</fullName>
        <shortName>MGD biosynthesis adapter protein</shortName>
    </recommendedName>
    <alternativeName>
        <fullName>Molybdenum cofactor biosynthesis adapter protein</fullName>
        <shortName>Moco biosynthesis adapter protein</shortName>
    </alternativeName>
</protein>
<evidence type="ECO:0000250" key="1"/>
<evidence type="ECO:0000255" key="2"/>
<evidence type="ECO:0000305" key="3"/>
<comment type="function">
    <text evidence="1">GTP-binding protein that is not required for the biosynthesis of Mo-molybdopterin guanine dinucleotide (Mo-MGD) cofactor, and not necessary for the formation of active molybdoenzymes using this form of molybdenum cofactor. May act as an adapter protein to achieve the efficient biosynthesis and utilization of MGD. Displays a weak intrinsic GTPase activity (By similarity).</text>
</comment>
<comment type="subunit">
    <text evidence="1">Homodimer.</text>
</comment>
<comment type="similarity">
    <text evidence="3">Belongs to the MobB family.</text>
</comment>
<reference key="1">
    <citation type="journal article" date="1995" name="Science">
        <title>Whole-genome random sequencing and assembly of Haemophilus influenzae Rd.</title>
        <authorList>
            <person name="Fleischmann R.D."/>
            <person name="Adams M.D."/>
            <person name="White O."/>
            <person name="Clayton R.A."/>
            <person name="Kirkness E.F."/>
            <person name="Kerlavage A.R."/>
            <person name="Bult C.J."/>
            <person name="Tomb J.-F."/>
            <person name="Dougherty B.A."/>
            <person name="Merrick J.M."/>
            <person name="McKenney K."/>
            <person name="Sutton G.G."/>
            <person name="FitzHugh W."/>
            <person name="Fields C.A."/>
            <person name="Gocayne J.D."/>
            <person name="Scott J.D."/>
            <person name="Shirley R."/>
            <person name="Liu L.-I."/>
            <person name="Glodek A."/>
            <person name="Kelley J.M."/>
            <person name="Weidman J.F."/>
            <person name="Phillips C.A."/>
            <person name="Spriggs T."/>
            <person name="Hedblom E."/>
            <person name="Cotton M.D."/>
            <person name="Utterback T.R."/>
            <person name="Hanna M.C."/>
            <person name="Nguyen D.T."/>
            <person name="Saudek D.M."/>
            <person name="Brandon R.C."/>
            <person name="Fine L.D."/>
            <person name="Fritchman J.L."/>
            <person name="Fuhrmann J.L."/>
            <person name="Geoghagen N.S.M."/>
            <person name="Gnehm C.L."/>
            <person name="McDonald L.A."/>
            <person name="Small K.V."/>
            <person name="Fraser C.M."/>
            <person name="Smith H.O."/>
            <person name="Venter J.C."/>
        </authorList>
    </citation>
    <scope>NUCLEOTIDE SEQUENCE [LARGE SCALE GENOMIC DNA]</scope>
    <source>
        <strain>ATCC 51907 / DSM 11121 / KW20 / Rd</strain>
    </source>
</reference>
<reference key="2">
    <citation type="journal article" date="2000" name="Electrophoresis">
        <title>Two-dimensional map of the proteome of Haemophilus influenzae.</title>
        <authorList>
            <person name="Langen H."/>
            <person name="Takacs B."/>
            <person name="Evers S."/>
            <person name="Berndt P."/>
            <person name="Lahm H.W."/>
            <person name="Wipf B."/>
            <person name="Gray C."/>
            <person name="Fountoulakis M."/>
        </authorList>
    </citation>
    <scope>IDENTIFICATION BY MASS SPECTROMETRY</scope>
    <source>
        <strain>ATCC 51907 / DSM 11121 / KW20 / Rd</strain>
    </source>
</reference>
<name>MOBB_HAEIN</name>